<gene>
    <name evidence="1" type="primary">rplQ</name>
    <name type="ordered locus">Pden_0785</name>
</gene>
<organism>
    <name type="scientific">Paracoccus denitrificans (strain Pd 1222)</name>
    <dbReference type="NCBI Taxonomy" id="318586"/>
    <lineage>
        <taxon>Bacteria</taxon>
        <taxon>Pseudomonadati</taxon>
        <taxon>Pseudomonadota</taxon>
        <taxon>Alphaproteobacteria</taxon>
        <taxon>Rhodobacterales</taxon>
        <taxon>Paracoccaceae</taxon>
        <taxon>Paracoccus</taxon>
    </lineage>
</organism>
<sequence>MRHARGYRRLNRTHEHRKALFANMAGSLIEHEQIKTTLPKAKELRPIVEKLITLAKRGDLHARRQAAAQLKQDSHVAKLFDVLGARYKDRQGGYVRIMKAGFRYGDMAPMAIIEFVERDTSAKGAADRARLEAESAADES</sequence>
<accession>A1B053</accession>
<proteinExistence type="inferred from homology"/>
<name>RL17_PARDP</name>
<comment type="subunit">
    <text evidence="1">Part of the 50S ribosomal subunit. Contacts protein L32.</text>
</comment>
<comment type="similarity">
    <text evidence="1">Belongs to the bacterial ribosomal protein bL17 family.</text>
</comment>
<reference key="1">
    <citation type="submission" date="2006-12" db="EMBL/GenBank/DDBJ databases">
        <title>Complete sequence of chromosome 1 of Paracoccus denitrificans PD1222.</title>
        <authorList>
            <person name="Copeland A."/>
            <person name="Lucas S."/>
            <person name="Lapidus A."/>
            <person name="Barry K."/>
            <person name="Detter J.C."/>
            <person name="Glavina del Rio T."/>
            <person name="Hammon N."/>
            <person name="Israni S."/>
            <person name="Dalin E."/>
            <person name="Tice H."/>
            <person name="Pitluck S."/>
            <person name="Munk A.C."/>
            <person name="Brettin T."/>
            <person name="Bruce D."/>
            <person name="Han C."/>
            <person name="Tapia R."/>
            <person name="Gilna P."/>
            <person name="Schmutz J."/>
            <person name="Larimer F."/>
            <person name="Land M."/>
            <person name="Hauser L."/>
            <person name="Kyrpides N."/>
            <person name="Lykidis A."/>
            <person name="Spiro S."/>
            <person name="Richardson D.J."/>
            <person name="Moir J.W.B."/>
            <person name="Ferguson S.J."/>
            <person name="van Spanning R.J.M."/>
            <person name="Richardson P."/>
        </authorList>
    </citation>
    <scope>NUCLEOTIDE SEQUENCE [LARGE SCALE GENOMIC DNA]</scope>
    <source>
        <strain>Pd 1222</strain>
    </source>
</reference>
<evidence type="ECO:0000255" key="1">
    <source>
        <dbReference type="HAMAP-Rule" id="MF_01368"/>
    </source>
</evidence>
<evidence type="ECO:0000305" key="2"/>
<keyword id="KW-1185">Reference proteome</keyword>
<keyword id="KW-0687">Ribonucleoprotein</keyword>
<keyword id="KW-0689">Ribosomal protein</keyword>
<dbReference type="EMBL" id="CP000489">
    <property type="protein sequence ID" value="ABL68897.1"/>
    <property type="molecule type" value="Genomic_DNA"/>
</dbReference>
<dbReference type="RefSeq" id="WP_011747125.1">
    <property type="nucleotide sequence ID" value="NC_008686.1"/>
</dbReference>
<dbReference type="SMR" id="A1B053"/>
<dbReference type="STRING" id="318586.Pden_0785"/>
<dbReference type="EnsemblBacteria" id="ABL68897">
    <property type="protein sequence ID" value="ABL68897"/>
    <property type="gene ID" value="Pden_0785"/>
</dbReference>
<dbReference type="GeneID" id="93452009"/>
<dbReference type="KEGG" id="pde:Pden_0785"/>
<dbReference type="eggNOG" id="COG0203">
    <property type="taxonomic scope" value="Bacteria"/>
</dbReference>
<dbReference type="HOGENOM" id="CLU_074407_2_0_5"/>
<dbReference type="OrthoDB" id="9809073at2"/>
<dbReference type="Proteomes" id="UP000000361">
    <property type="component" value="Chromosome 1"/>
</dbReference>
<dbReference type="GO" id="GO:0022625">
    <property type="term" value="C:cytosolic large ribosomal subunit"/>
    <property type="evidence" value="ECO:0007669"/>
    <property type="project" value="TreeGrafter"/>
</dbReference>
<dbReference type="GO" id="GO:0003735">
    <property type="term" value="F:structural constituent of ribosome"/>
    <property type="evidence" value="ECO:0007669"/>
    <property type="project" value="InterPro"/>
</dbReference>
<dbReference type="GO" id="GO:0006412">
    <property type="term" value="P:translation"/>
    <property type="evidence" value="ECO:0007669"/>
    <property type="project" value="UniProtKB-UniRule"/>
</dbReference>
<dbReference type="FunFam" id="3.90.1030.10:FF:000001">
    <property type="entry name" value="50S ribosomal protein L17"/>
    <property type="match status" value="1"/>
</dbReference>
<dbReference type="Gene3D" id="3.90.1030.10">
    <property type="entry name" value="Ribosomal protein L17"/>
    <property type="match status" value="1"/>
</dbReference>
<dbReference type="HAMAP" id="MF_01368">
    <property type="entry name" value="Ribosomal_bL17"/>
    <property type="match status" value="1"/>
</dbReference>
<dbReference type="InterPro" id="IPR000456">
    <property type="entry name" value="Ribosomal_bL17"/>
</dbReference>
<dbReference type="InterPro" id="IPR047859">
    <property type="entry name" value="Ribosomal_bL17_CS"/>
</dbReference>
<dbReference type="InterPro" id="IPR036373">
    <property type="entry name" value="Ribosomal_bL17_sf"/>
</dbReference>
<dbReference type="NCBIfam" id="TIGR00059">
    <property type="entry name" value="L17"/>
    <property type="match status" value="1"/>
</dbReference>
<dbReference type="PANTHER" id="PTHR14413:SF16">
    <property type="entry name" value="LARGE RIBOSOMAL SUBUNIT PROTEIN BL17M"/>
    <property type="match status" value="1"/>
</dbReference>
<dbReference type="PANTHER" id="PTHR14413">
    <property type="entry name" value="RIBOSOMAL PROTEIN L17"/>
    <property type="match status" value="1"/>
</dbReference>
<dbReference type="Pfam" id="PF01196">
    <property type="entry name" value="Ribosomal_L17"/>
    <property type="match status" value="1"/>
</dbReference>
<dbReference type="SUPFAM" id="SSF64263">
    <property type="entry name" value="Prokaryotic ribosomal protein L17"/>
    <property type="match status" value="1"/>
</dbReference>
<dbReference type="PROSITE" id="PS01167">
    <property type="entry name" value="RIBOSOMAL_L17"/>
    <property type="match status" value="1"/>
</dbReference>
<feature type="chain" id="PRO_1000055899" description="Large ribosomal subunit protein bL17">
    <location>
        <begin position="1"/>
        <end position="140"/>
    </location>
</feature>
<protein>
    <recommendedName>
        <fullName evidence="1">Large ribosomal subunit protein bL17</fullName>
    </recommendedName>
    <alternativeName>
        <fullName evidence="2">50S ribosomal protein L17</fullName>
    </alternativeName>
</protein>